<name>FOLT2_CAEEL</name>
<comment type="function">
    <text evidence="2">Unlike folt-1, does not appear to act as a folate transporter.</text>
</comment>
<comment type="subcellular location">
    <subcellularLocation>
        <location evidence="3">Membrane</location>
        <topology evidence="3">Multi-pass membrane protein</topology>
    </subcellularLocation>
</comment>
<comment type="similarity">
    <text evidence="3">Belongs to the reduced folate carrier (RFC) transporter (TC 2.A.48) family.</text>
</comment>
<reference key="1">
    <citation type="journal article" date="1998" name="Science">
        <title>Genome sequence of the nematode C. elegans: a platform for investigating biology.</title>
        <authorList>
            <consortium name="The C. elegans sequencing consortium"/>
        </authorList>
    </citation>
    <scope>NUCLEOTIDE SEQUENCE [LARGE SCALE GENOMIC DNA]</scope>
    <source>
        <strain>Bristol N2</strain>
    </source>
</reference>
<reference key="2">
    <citation type="journal article" date="2007" name="Am. J. Physiol.">
        <title>Cloning and functional characterization of a folate transporter from the nematode Caenorhabditis elegans.</title>
        <authorList>
            <person name="Balamurugan K."/>
            <person name="Ashokkumar B."/>
            <person name="Moussaif M."/>
            <person name="Sze J.Y."/>
            <person name="Said H.M."/>
        </authorList>
    </citation>
    <scope>NOMENCLATURE</scope>
    <scope>FUNCTION</scope>
</reference>
<dbReference type="EMBL" id="FO080739">
    <property type="protein sequence ID" value="CCD66319.1"/>
    <property type="molecule type" value="Genomic_DNA"/>
</dbReference>
<dbReference type="PIR" id="A88979">
    <property type="entry name" value="A88979"/>
</dbReference>
<dbReference type="RefSeq" id="NP_503780.1">
    <property type="nucleotide sequence ID" value="NM_071379.6"/>
</dbReference>
<dbReference type="SMR" id="O45166"/>
<dbReference type="BioGRID" id="43802">
    <property type="interactions" value="3"/>
</dbReference>
<dbReference type="DIP" id="DIP-25852N"/>
<dbReference type="FunCoup" id="O45166">
    <property type="interactions" value="67"/>
</dbReference>
<dbReference type="STRING" id="6239.F37B4.7.1"/>
<dbReference type="TCDB" id="2.A.48.1.7">
    <property type="family name" value="the reduced folate carrier (rfc) family"/>
</dbReference>
<dbReference type="GlyCosmos" id="O45166">
    <property type="glycosylation" value="2 sites, No reported glycans"/>
</dbReference>
<dbReference type="PaxDb" id="6239-F37B4.7"/>
<dbReference type="PeptideAtlas" id="O45166"/>
<dbReference type="EnsemblMetazoa" id="F37B4.7.1">
    <property type="protein sequence ID" value="F37B4.7.1"/>
    <property type="gene ID" value="WBGene00018138"/>
</dbReference>
<dbReference type="GeneID" id="178745"/>
<dbReference type="KEGG" id="cel:CELE_F37B4.7"/>
<dbReference type="UCSC" id="F37B4.7">
    <property type="organism name" value="c. elegans"/>
</dbReference>
<dbReference type="AGR" id="WB:WBGene00018138"/>
<dbReference type="CTD" id="178745"/>
<dbReference type="WormBase" id="F37B4.7">
    <property type="protein sequence ID" value="CE17796"/>
    <property type="gene ID" value="WBGene00018138"/>
    <property type="gene designation" value="folt-2"/>
</dbReference>
<dbReference type="eggNOG" id="KOG3810">
    <property type="taxonomic scope" value="Eukaryota"/>
</dbReference>
<dbReference type="GeneTree" id="ENSGT00950000183022"/>
<dbReference type="HOGENOM" id="CLU_036909_0_1_1"/>
<dbReference type="InParanoid" id="O45166"/>
<dbReference type="OMA" id="CYRCRPL"/>
<dbReference type="OrthoDB" id="18814at2759"/>
<dbReference type="PhylomeDB" id="O45166"/>
<dbReference type="Reactome" id="R-CEL-196757">
    <property type="pathway name" value="Metabolism of folate and pterines"/>
</dbReference>
<dbReference type="Reactome" id="R-CEL-196819">
    <property type="pathway name" value="Vitamin B1 (thiamin) metabolism"/>
</dbReference>
<dbReference type="PRO" id="PR:O45166"/>
<dbReference type="Proteomes" id="UP000001940">
    <property type="component" value="Chromosome V"/>
</dbReference>
<dbReference type="Bgee" id="WBGene00018138">
    <property type="expression patterns" value="Expressed in adult organism and 4 other cell types or tissues"/>
</dbReference>
<dbReference type="GO" id="GO:0005886">
    <property type="term" value="C:plasma membrane"/>
    <property type="evidence" value="ECO:0000318"/>
    <property type="project" value="GO_Central"/>
</dbReference>
<dbReference type="GO" id="GO:0005542">
    <property type="term" value="F:folic acid binding"/>
    <property type="evidence" value="ECO:0007669"/>
    <property type="project" value="UniProtKB-KW"/>
</dbReference>
<dbReference type="GO" id="GO:0090482">
    <property type="term" value="F:vitamin transmembrane transporter activity"/>
    <property type="evidence" value="ECO:0007669"/>
    <property type="project" value="InterPro"/>
</dbReference>
<dbReference type="GO" id="GO:0055085">
    <property type="term" value="P:transmembrane transport"/>
    <property type="evidence" value="ECO:0000318"/>
    <property type="project" value="GO_Central"/>
</dbReference>
<dbReference type="FunFam" id="1.20.1250.20:FF:000298">
    <property type="entry name" value="Thiamine transporter"/>
    <property type="match status" value="1"/>
</dbReference>
<dbReference type="Gene3D" id="1.20.1250.20">
    <property type="entry name" value="MFS general substrate transporter like domains"/>
    <property type="match status" value="1"/>
</dbReference>
<dbReference type="InterPro" id="IPR002666">
    <property type="entry name" value="Folate_carrier"/>
</dbReference>
<dbReference type="InterPro" id="IPR036259">
    <property type="entry name" value="MFS_trans_sf"/>
</dbReference>
<dbReference type="InterPro" id="IPR028338">
    <property type="entry name" value="ThTr-1"/>
</dbReference>
<dbReference type="NCBIfam" id="TIGR00806">
    <property type="entry name" value="rfc"/>
    <property type="match status" value="1"/>
</dbReference>
<dbReference type="PANTHER" id="PTHR10686">
    <property type="entry name" value="FOLATE TRANSPORTER"/>
    <property type="match status" value="1"/>
</dbReference>
<dbReference type="PANTHER" id="PTHR10686:SF14">
    <property type="entry name" value="FOLATE-LIKE TRANSPORTER 2"/>
    <property type="match status" value="1"/>
</dbReference>
<dbReference type="Pfam" id="PF01770">
    <property type="entry name" value="Folate_carrier"/>
    <property type="match status" value="1"/>
</dbReference>
<dbReference type="PIRSF" id="PIRSF028739">
    <property type="entry name" value="Folate_carrier"/>
    <property type="match status" value="1"/>
</dbReference>
<dbReference type="PIRSF" id="PIRSF500794">
    <property type="entry name" value="Thiamine_transporter_1"/>
    <property type="match status" value="1"/>
</dbReference>
<dbReference type="SUPFAM" id="SSF103473">
    <property type="entry name" value="MFS general substrate transporter"/>
    <property type="match status" value="1"/>
</dbReference>
<evidence type="ECO:0000255" key="1"/>
<evidence type="ECO:0000269" key="2">
    <source>
    </source>
</evidence>
<evidence type="ECO:0000305" key="3"/>
<sequence length="424" mass="48964">MEQWKVMVLICMYGAVKEFRPTEPYMYEYQHTVLNMSEQTLNSQVYPIWTYSYLITLIPAFLLTDVFLYKPLLVFEAFSYFLCWVIFVFGKSVWSQQVLEVFYGWATATEIAYFAYIYVKVPKTEYKSATAFTRAALLVGRFLAYALAQLLIGLNWTSYSTLNIISLVAMTIAVFLALILPGVEWKEAYEKKLEDNNVQGNLKEIVDQSSYMDYLRMFFVGLRHNLMAIYRNPLILKWSVWSALSSCIFYQVTNYTQTLWGTLPESANRYNGITEALVPLLGIPADLITRQLNVNWNRWGDLLLAVGSIGQAGLLFWMSQSHHIVVLYLSYIFYRVIYQLTTTIAQSTLAFSLDSRLFGLLFGINTFVALLLQSILTAVVIDWQKLDIRPQFVVYSCYHLVVAFGFAIIFGIWASRRFFKTSTN</sequence>
<accession>O45166</accession>
<organism>
    <name type="scientific">Caenorhabditis elegans</name>
    <dbReference type="NCBI Taxonomy" id="6239"/>
    <lineage>
        <taxon>Eukaryota</taxon>
        <taxon>Metazoa</taxon>
        <taxon>Ecdysozoa</taxon>
        <taxon>Nematoda</taxon>
        <taxon>Chromadorea</taxon>
        <taxon>Rhabditida</taxon>
        <taxon>Rhabditina</taxon>
        <taxon>Rhabditomorpha</taxon>
        <taxon>Rhabditoidea</taxon>
        <taxon>Rhabditidae</taxon>
        <taxon>Peloderinae</taxon>
        <taxon>Caenorhabditis</taxon>
    </lineage>
</organism>
<feature type="chain" id="PRO_0000178666" description="Folate-like transporter 2">
    <location>
        <begin position="1"/>
        <end position="424"/>
    </location>
</feature>
<feature type="transmembrane region" description="Helical" evidence="1">
    <location>
        <begin position="48"/>
        <end position="68"/>
    </location>
</feature>
<feature type="transmembrane region" description="Helical" evidence="1">
    <location>
        <begin position="71"/>
        <end position="91"/>
    </location>
</feature>
<feature type="transmembrane region" description="Helical" evidence="1">
    <location>
        <begin position="99"/>
        <end position="119"/>
    </location>
</feature>
<feature type="transmembrane region" description="Helical" evidence="1">
    <location>
        <begin position="136"/>
        <end position="156"/>
    </location>
</feature>
<feature type="transmembrane region" description="Helical" evidence="1">
    <location>
        <begin position="164"/>
        <end position="184"/>
    </location>
</feature>
<feature type="transmembrane region" description="Helical" evidence="1">
    <location>
        <begin position="233"/>
        <end position="253"/>
    </location>
</feature>
<feature type="transmembrane region" description="Helical" evidence="1">
    <location>
        <begin position="299"/>
        <end position="319"/>
    </location>
</feature>
<feature type="transmembrane region" description="Helical" evidence="1">
    <location>
        <begin position="324"/>
        <end position="344"/>
    </location>
</feature>
<feature type="transmembrane region" description="Helical" evidence="1">
    <location>
        <begin position="361"/>
        <end position="381"/>
    </location>
</feature>
<feature type="transmembrane region" description="Helical" evidence="1">
    <location>
        <begin position="392"/>
        <end position="412"/>
    </location>
</feature>
<feature type="glycosylation site" description="N-linked (GlcNAc...) asparagine" evidence="1">
    <location>
        <position position="35"/>
    </location>
</feature>
<feature type="glycosylation site" description="N-linked (GlcNAc...) asparagine" evidence="1">
    <location>
        <position position="254"/>
    </location>
</feature>
<proteinExistence type="inferred from homology"/>
<keyword id="KW-0290">Folate-binding</keyword>
<keyword id="KW-0325">Glycoprotein</keyword>
<keyword id="KW-0472">Membrane</keyword>
<keyword id="KW-1185">Reference proteome</keyword>
<keyword id="KW-0812">Transmembrane</keyword>
<keyword id="KW-1133">Transmembrane helix</keyword>
<keyword id="KW-0813">Transport</keyword>
<gene>
    <name type="primary">folt-2</name>
    <name type="ORF">F37B4.7</name>
</gene>
<protein>
    <recommendedName>
        <fullName>Folate-like transporter 2</fullName>
    </recommendedName>
</protein>